<organism evidence="11">
    <name type="scientific">Danio rerio</name>
    <name type="common">Zebrafish</name>
    <name type="synonym">Brachydanio rerio</name>
    <dbReference type="NCBI Taxonomy" id="7955"/>
    <lineage>
        <taxon>Eukaryota</taxon>
        <taxon>Metazoa</taxon>
        <taxon>Chordata</taxon>
        <taxon>Craniata</taxon>
        <taxon>Vertebrata</taxon>
        <taxon>Euteleostomi</taxon>
        <taxon>Actinopterygii</taxon>
        <taxon>Neopterygii</taxon>
        <taxon>Teleostei</taxon>
        <taxon>Ostariophysi</taxon>
        <taxon>Cypriniformes</taxon>
        <taxon>Danionidae</taxon>
        <taxon>Danioninae</taxon>
        <taxon>Danio</taxon>
    </lineage>
</organism>
<proteinExistence type="evidence at protein level"/>
<sequence length="307" mass="34018">MTLTEIIFVLTGTCAILVFGGKIASLIMMLITKLFCPLPEAFFTSLGKWAVITGGSDGIGRAYAEELSKQGMSVIIISRNQEKLDRAAKKIELNTGGKVKVIAADFTKDDIYGHITENIEGLDIGVLVNNVGILPSQIPCKLLETSDLEERIYDIVNCNVKSMVKMCRIVLPGMQQRRRGVILNVSSGIAKIPCPIYTLYAASKVFVERFSQGLQAEYISKGIIIQTVAPFGVSTAMTGHQKPDMVTFTAEEFVRSSLKYLKTGDQTYGSITHTLLGRIVQSIPTWVLQSETFQHHFQEYVKNRDRR</sequence>
<keyword id="KW-0256">Endoplasmic reticulum</keyword>
<keyword id="KW-0444">Lipid biosynthesis</keyword>
<keyword id="KW-0443">Lipid metabolism</keyword>
<keyword id="KW-0472">Membrane</keyword>
<keyword id="KW-0521">NADP</keyword>
<keyword id="KW-0560">Oxidoreductase</keyword>
<keyword id="KW-1185">Reference proteome</keyword>
<keyword id="KW-0752">Steroid biosynthesis</keyword>
<keyword id="KW-0812">Transmembrane</keyword>
<keyword id="KW-1133">Transmembrane helix</keyword>
<comment type="function">
    <text evidence="2 6 7">Catalyzes the conversion of 17-oxosteroids to 17beta-hydroxysteroids in the presence of NADPH (PubMed:16216911, PubMed:27927697). Favors the reduction of androstenedione to testosterone (PubMed:16216911, PubMed:27927697). Testosterone is the key androgen driving male development and function (By similarity). Among further tested androgens epiandrosterone and dehydroepiandrosterone are accepted as substrates and reduced at C-17 (PubMed:16216911). Can also reduce 11-ketoandrostenedione as well as 11beta-hydroxyandrostenedione at C-17 to the respective testosterone forms (PubMed:16216911, PubMed:27927697). Cannot use androsterone and androstanedione as substrates (PubMed:16216911).</text>
</comment>
<comment type="catalytic activity">
    <reaction evidence="6 7">
        <text>a 17beta-hydroxy steroid + NADP(+) = a 17-oxo steroid + NADPH + H(+)</text>
        <dbReference type="Rhea" id="RHEA:69284"/>
        <dbReference type="ChEBI" id="CHEBI:15378"/>
        <dbReference type="ChEBI" id="CHEBI:19168"/>
        <dbReference type="ChEBI" id="CHEBI:35343"/>
        <dbReference type="ChEBI" id="CHEBI:57783"/>
        <dbReference type="ChEBI" id="CHEBI:58349"/>
    </reaction>
    <physiologicalReaction direction="right-to-left" evidence="9 10">
        <dbReference type="Rhea" id="RHEA:69286"/>
    </physiologicalReaction>
</comment>
<comment type="catalytic activity">
    <reaction evidence="6 7">
        <text>testosterone + NADP(+) = androst-4-ene-3,17-dione + NADPH + H(+)</text>
        <dbReference type="Rhea" id="RHEA:14981"/>
        <dbReference type="ChEBI" id="CHEBI:15378"/>
        <dbReference type="ChEBI" id="CHEBI:16422"/>
        <dbReference type="ChEBI" id="CHEBI:17347"/>
        <dbReference type="ChEBI" id="CHEBI:57783"/>
        <dbReference type="ChEBI" id="CHEBI:58349"/>
        <dbReference type="EC" id="1.1.1.64"/>
    </reaction>
    <physiologicalReaction direction="right-to-left" evidence="9 10">
        <dbReference type="Rhea" id="RHEA:14983"/>
    </physiologicalReaction>
</comment>
<comment type="catalytic activity">
    <reaction evidence="6">
        <text>3beta-hydroxyandrost-5-en-17-one + NADPH + H(+) = androst-5-en-3beta,17beta-diol + NADP(+)</text>
        <dbReference type="Rhea" id="RHEA:46628"/>
        <dbReference type="ChEBI" id="CHEBI:2710"/>
        <dbReference type="ChEBI" id="CHEBI:15378"/>
        <dbReference type="ChEBI" id="CHEBI:28689"/>
        <dbReference type="ChEBI" id="CHEBI:57783"/>
        <dbReference type="ChEBI" id="CHEBI:58349"/>
    </reaction>
    <physiologicalReaction direction="left-to-right" evidence="9">
        <dbReference type="Rhea" id="RHEA:46629"/>
    </physiologicalReaction>
</comment>
<comment type="catalytic activity">
    <reaction evidence="6">
        <text>3beta-hydroxy-5alpha-androstan-17-one + NADPH + H(+) = 5alpha-androstane-3beta,17beta-diol + NADP(+)</text>
        <dbReference type="Rhea" id="RHEA:53480"/>
        <dbReference type="ChEBI" id="CHEBI:15378"/>
        <dbReference type="ChEBI" id="CHEBI:18329"/>
        <dbReference type="ChEBI" id="CHEBI:57783"/>
        <dbReference type="ChEBI" id="CHEBI:58349"/>
        <dbReference type="ChEBI" id="CHEBI:541975"/>
    </reaction>
    <physiologicalReaction direction="left-to-right" evidence="9">
        <dbReference type="Rhea" id="RHEA:53481"/>
    </physiologicalReaction>
</comment>
<comment type="catalytic activity">
    <reaction evidence="6 7">
        <text>androst-4-ene-3,11,17-trione + NADPH + H(+) = 17beta-hydroxyandrost-4-ene-3,11-dione + NADP(+)</text>
        <dbReference type="Rhea" id="RHEA:53484"/>
        <dbReference type="ChEBI" id="CHEBI:2495"/>
        <dbReference type="ChEBI" id="CHEBI:15378"/>
        <dbReference type="ChEBI" id="CHEBI:34133"/>
        <dbReference type="ChEBI" id="CHEBI:57783"/>
        <dbReference type="ChEBI" id="CHEBI:58349"/>
    </reaction>
    <physiologicalReaction direction="left-to-right" evidence="9 10">
        <dbReference type="Rhea" id="RHEA:53485"/>
    </physiologicalReaction>
</comment>
<comment type="catalytic activity">
    <reaction evidence="6">
        <text>11beta-hydroxyandrost-4-ene-3,17-dione + NADPH + H(+) = 11beta,17beta-dihydroxyandrost-4-ene-3-one + NADP(+)</text>
        <dbReference type="Rhea" id="RHEA:53488"/>
        <dbReference type="ChEBI" id="CHEBI:15378"/>
        <dbReference type="ChEBI" id="CHEBI:27967"/>
        <dbReference type="ChEBI" id="CHEBI:57783"/>
        <dbReference type="ChEBI" id="CHEBI:58349"/>
        <dbReference type="ChEBI" id="CHEBI:81481"/>
    </reaction>
    <physiologicalReaction direction="left-to-right" evidence="9">
        <dbReference type="Rhea" id="RHEA:53489"/>
    </physiologicalReaction>
</comment>
<comment type="pathway">
    <text evidence="8">Hormone biosynthesis; testosterone biosynthesis.</text>
</comment>
<comment type="pathway">
    <text evidence="8">Steroid metabolism.</text>
</comment>
<comment type="subcellular location">
    <subcellularLocation>
        <location evidence="6">Endoplasmic reticulum</location>
    </subcellularLocation>
    <subcellularLocation>
        <location evidence="3">Membrane</location>
        <topology evidence="3">Single-pass membrane protein</topology>
    </subcellularLocation>
</comment>
<comment type="tissue specificity">
    <text evidence="6">Expression shows strong sexual dimorphism. In female, highly expressed in ovaries, and at lower levels in skin muscle, eyes and liver (PubMed:16216911). In males, strongly expressed in liver and at lower levels in testis, spleen, kidney, intestine and muscle (PubMed:16216911).</text>
</comment>
<comment type="developmental stage">
    <text evidence="6">Expressed in embryogenesis from sphere to 84 h post-fertilization.</text>
</comment>
<comment type="similarity">
    <text evidence="5">Belongs to the short-chain dehydrogenases/reductases (SDR) family.</text>
</comment>
<gene>
    <name type="primary">hsd17b3</name>
</gene>
<name>DHB3_DANRE</name>
<reference evidence="11" key="1">
    <citation type="journal article" date="2005" name="J. Mol. Endocrinol.">
        <title>Androgen metabolism via 17beta-hydroxysteroid dehydrogenase type 3 in mammalian and non-mammalian vertebrates: comparison of the human and the zebrafish enzyme.</title>
        <authorList>
            <person name="Mindnich R."/>
            <person name="Haller F."/>
            <person name="Halbach F."/>
            <person name="Moeller G."/>
            <person name="Hrabe de Angelis M."/>
            <person name="Adamski J."/>
        </authorList>
    </citation>
    <scope>NUCLEOTIDE SEQUENCE</scope>
    <scope>CATALYTIC ACTIVITY</scope>
    <scope>TISSUE SPECIFICITY</scope>
    <scope>SUBCELLULAR LOCATION</scope>
    <scope>FUNCTION</scope>
    <scope>DEVELOPMENTAL STAGE</scope>
</reference>
<reference key="2">
    <citation type="journal article" date="2013" name="Nature">
        <title>The zebrafish reference genome sequence and its relationship to the human genome.</title>
        <authorList>
            <person name="Howe K."/>
            <person name="Clark M.D."/>
            <person name="Torroja C.F."/>
            <person name="Torrance J."/>
            <person name="Berthelot C."/>
            <person name="Muffato M."/>
            <person name="Collins J.E."/>
            <person name="Humphray S."/>
            <person name="McLaren K."/>
            <person name="Matthews L."/>
            <person name="McLaren S."/>
            <person name="Sealy I."/>
            <person name="Caccamo M."/>
            <person name="Churcher C."/>
            <person name="Scott C."/>
            <person name="Barrett J.C."/>
            <person name="Koch R."/>
            <person name="Rauch G.J."/>
            <person name="White S."/>
            <person name="Chow W."/>
            <person name="Kilian B."/>
            <person name="Quintais L.T."/>
            <person name="Guerra-Assuncao J.A."/>
            <person name="Zhou Y."/>
            <person name="Gu Y."/>
            <person name="Yen J."/>
            <person name="Vogel J.H."/>
            <person name="Eyre T."/>
            <person name="Redmond S."/>
            <person name="Banerjee R."/>
            <person name="Chi J."/>
            <person name="Fu B."/>
            <person name="Langley E."/>
            <person name="Maguire S.F."/>
            <person name="Laird G.K."/>
            <person name="Lloyd D."/>
            <person name="Kenyon E."/>
            <person name="Donaldson S."/>
            <person name="Sehra H."/>
            <person name="Almeida-King J."/>
            <person name="Loveland J."/>
            <person name="Trevanion S."/>
            <person name="Jones M."/>
            <person name="Quail M."/>
            <person name="Willey D."/>
            <person name="Hunt A."/>
            <person name="Burton J."/>
            <person name="Sims S."/>
            <person name="McLay K."/>
            <person name="Plumb B."/>
            <person name="Davis J."/>
            <person name="Clee C."/>
            <person name="Oliver K."/>
            <person name="Clark R."/>
            <person name="Riddle C."/>
            <person name="Elliot D."/>
            <person name="Threadgold G."/>
            <person name="Harden G."/>
            <person name="Ware D."/>
            <person name="Begum S."/>
            <person name="Mortimore B."/>
            <person name="Kerry G."/>
            <person name="Heath P."/>
            <person name="Phillimore B."/>
            <person name="Tracey A."/>
            <person name="Corby N."/>
            <person name="Dunn M."/>
            <person name="Johnson C."/>
            <person name="Wood J."/>
            <person name="Clark S."/>
            <person name="Pelan S."/>
            <person name="Griffiths G."/>
            <person name="Smith M."/>
            <person name="Glithero R."/>
            <person name="Howden P."/>
            <person name="Barker N."/>
            <person name="Lloyd C."/>
            <person name="Stevens C."/>
            <person name="Harley J."/>
            <person name="Holt K."/>
            <person name="Panagiotidis G."/>
            <person name="Lovell J."/>
            <person name="Beasley H."/>
            <person name="Henderson C."/>
            <person name="Gordon D."/>
            <person name="Auger K."/>
            <person name="Wright D."/>
            <person name="Collins J."/>
            <person name="Raisen C."/>
            <person name="Dyer L."/>
            <person name="Leung K."/>
            <person name="Robertson L."/>
            <person name="Ambridge K."/>
            <person name="Leongamornlert D."/>
            <person name="McGuire S."/>
            <person name="Gilderthorp R."/>
            <person name="Griffiths C."/>
            <person name="Manthravadi D."/>
            <person name="Nichol S."/>
            <person name="Barker G."/>
            <person name="Whitehead S."/>
            <person name="Kay M."/>
            <person name="Brown J."/>
            <person name="Murnane C."/>
            <person name="Gray E."/>
            <person name="Humphries M."/>
            <person name="Sycamore N."/>
            <person name="Barker D."/>
            <person name="Saunders D."/>
            <person name="Wallis J."/>
            <person name="Babbage A."/>
            <person name="Hammond S."/>
            <person name="Mashreghi-Mohammadi M."/>
            <person name="Barr L."/>
            <person name="Martin S."/>
            <person name="Wray P."/>
            <person name="Ellington A."/>
            <person name="Matthews N."/>
            <person name="Ellwood M."/>
            <person name="Woodmansey R."/>
            <person name="Clark G."/>
            <person name="Cooper J."/>
            <person name="Tromans A."/>
            <person name="Grafham D."/>
            <person name="Skuce C."/>
            <person name="Pandian R."/>
            <person name="Andrews R."/>
            <person name="Harrison E."/>
            <person name="Kimberley A."/>
            <person name="Garnett J."/>
            <person name="Fosker N."/>
            <person name="Hall R."/>
            <person name="Garner P."/>
            <person name="Kelly D."/>
            <person name="Bird C."/>
            <person name="Palmer S."/>
            <person name="Gehring I."/>
            <person name="Berger A."/>
            <person name="Dooley C.M."/>
            <person name="Ersan-Urun Z."/>
            <person name="Eser C."/>
            <person name="Geiger H."/>
            <person name="Geisler M."/>
            <person name="Karotki L."/>
            <person name="Kirn A."/>
            <person name="Konantz J."/>
            <person name="Konantz M."/>
            <person name="Oberlander M."/>
            <person name="Rudolph-Geiger S."/>
            <person name="Teucke M."/>
            <person name="Lanz C."/>
            <person name="Raddatz G."/>
            <person name="Osoegawa K."/>
            <person name="Zhu B."/>
            <person name="Rapp A."/>
            <person name="Widaa S."/>
            <person name="Langford C."/>
            <person name="Yang F."/>
            <person name="Schuster S.C."/>
            <person name="Carter N.P."/>
            <person name="Harrow J."/>
            <person name="Ning Z."/>
            <person name="Herrero J."/>
            <person name="Searle S.M."/>
            <person name="Enright A."/>
            <person name="Geisler R."/>
            <person name="Plasterk R.H."/>
            <person name="Lee C."/>
            <person name="Westerfield M."/>
            <person name="de Jong P.J."/>
            <person name="Zon L.I."/>
            <person name="Postlethwait J.H."/>
            <person name="Nusslein-Volhard C."/>
            <person name="Hubbard T.J."/>
            <person name="Roest Crollius H."/>
            <person name="Rogers J."/>
            <person name="Stemple D.L."/>
        </authorList>
    </citation>
    <scope>NUCLEOTIDE SEQUENCE [LARGE SCALE GENOMIC DNA]</scope>
    <source>
        <strain>Tuebingen</strain>
    </source>
</reference>
<reference key="3">
    <citation type="journal article" date="2017" name="J. Endocrinol.">
        <title>Absence of 11-keto reduction of cortisone and 11-ketotestosterone in the model organism zebrafish.</title>
        <authorList>
            <person name="Tsachaki M."/>
            <person name="Meyer A."/>
            <person name="Weger B."/>
            <person name="Kratschmar D.V."/>
            <person name="Tokarz J."/>
            <person name="Adamski J."/>
            <person name="Belting H.G."/>
            <person name="Affolter M."/>
            <person name="Dickmeis T."/>
            <person name="Odermatt A."/>
        </authorList>
    </citation>
    <scope>CATALYTIC ACTIVITY</scope>
    <scope>FUNCTION</scope>
</reference>
<protein>
    <recommendedName>
        <fullName>17-beta-hydroxysteroid dehydrogenase type 3</fullName>
        <shortName>17-beta-HSD 3</shortName>
    </recommendedName>
    <alternativeName>
        <fullName>Short chain dehydrogenase/reductase family 12C member 2</fullName>
    </alternativeName>
    <alternativeName>
        <fullName>Testicular 17-beta-hydroxysteroid dehydrogenase</fullName>
    </alternativeName>
    <alternativeName>
        <fullName evidence="8">Testosterone 17-beta-dehydrogenase 3</fullName>
        <ecNumber evidence="6 7">1.1.1.64</ecNumber>
    </alternativeName>
</protein>
<accession>Q6QA32</accession>
<feature type="chain" id="PRO_0000451342" description="17-beta-hydroxysteroid dehydrogenase type 3">
    <location>
        <begin position="1"/>
        <end position="307"/>
    </location>
</feature>
<feature type="transmembrane region" description="Helical" evidence="3">
    <location>
        <begin position="6"/>
        <end position="26"/>
    </location>
</feature>
<feature type="active site" description="Proton acceptor" evidence="4">
    <location>
        <position position="200"/>
    </location>
</feature>
<feature type="binding site" evidence="1">
    <location>
        <begin position="47"/>
        <end position="76"/>
    </location>
    <ligand>
        <name>NADP(+)</name>
        <dbReference type="ChEBI" id="CHEBI:58349"/>
    </ligand>
</feature>
<feature type="binding site" evidence="1">
    <location>
        <position position="187"/>
    </location>
    <ligand>
        <name>substrate</name>
    </ligand>
</feature>
<dbReference type="EC" id="1.1.1.64" evidence="6 7"/>
<dbReference type="EMBL" id="CR376747">
    <property type="status" value="NOT_ANNOTATED_CDS"/>
    <property type="molecule type" value="Genomic_DNA"/>
</dbReference>
<dbReference type="EMBL" id="AY551081">
    <property type="protein sequence ID" value="AAS58451.1"/>
    <property type="molecule type" value="mRNA"/>
</dbReference>
<dbReference type="RefSeq" id="XP_005167205.1">
    <property type="nucleotide sequence ID" value="XM_005167148.5"/>
</dbReference>
<dbReference type="SMR" id="Q6QA32"/>
<dbReference type="FunCoup" id="Q6QA32">
    <property type="interactions" value="74"/>
</dbReference>
<dbReference type="SwissLipids" id="SLP:000001726"/>
<dbReference type="DNASU" id="393335"/>
<dbReference type="Ensembl" id="ENSDART00000186229">
    <property type="protein sequence ID" value="ENSDARP00000151778"/>
    <property type="gene ID" value="ENSDARG00000115935"/>
</dbReference>
<dbReference type="GeneID" id="393335"/>
<dbReference type="AGR" id="ZFIN:ZDB-GENE-040426-1339"/>
<dbReference type="CTD" id="3293"/>
<dbReference type="ZFIN" id="ZDB-GENE-040426-1339">
    <property type="gene designation" value="hsd17b3"/>
</dbReference>
<dbReference type="InParanoid" id="Q6QA32"/>
<dbReference type="OMA" id="GNMPIPN"/>
<dbReference type="OrthoDB" id="5545019at2759"/>
<dbReference type="PhylomeDB" id="Q6QA32"/>
<dbReference type="BRENDA" id="1.1.1.51">
    <property type="organism ID" value="928"/>
</dbReference>
<dbReference type="Reactome" id="R-DRE-193048">
    <property type="pathway name" value="Androgen biosynthesis"/>
</dbReference>
<dbReference type="Reactome" id="R-DRE-75876">
    <property type="pathway name" value="Synthesis of very long-chain fatty acyl-CoAs"/>
</dbReference>
<dbReference type="UniPathway" id="UPA00367"/>
<dbReference type="PRO" id="PR:Q6QA32"/>
<dbReference type="Proteomes" id="UP000000437">
    <property type="component" value="Chromosome 8"/>
</dbReference>
<dbReference type="GO" id="GO:0005783">
    <property type="term" value="C:endoplasmic reticulum"/>
    <property type="evidence" value="ECO:0000314"/>
    <property type="project" value="ZFIN"/>
</dbReference>
<dbReference type="GO" id="GO:0016020">
    <property type="term" value="C:membrane"/>
    <property type="evidence" value="ECO:0007669"/>
    <property type="project" value="UniProtKB-SubCell"/>
</dbReference>
<dbReference type="GO" id="GO:0047045">
    <property type="term" value="F:testosterone 17-beta-dehydrogenase (NADP+) activity"/>
    <property type="evidence" value="ECO:0000314"/>
    <property type="project" value="ZFIN"/>
</dbReference>
<dbReference type="GO" id="GO:0006702">
    <property type="term" value="P:androgen biosynthetic process"/>
    <property type="evidence" value="ECO:0000314"/>
    <property type="project" value="ZFIN"/>
</dbReference>
<dbReference type="GO" id="GO:0061370">
    <property type="term" value="P:testosterone biosynthetic process"/>
    <property type="evidence" value="ECO:0007669"/>
    <property type="project" value="UniProtKB-UniPathway"/>
</dbReference>
<dbReference type="CDD" id="cd05356">
    <property type="entry name" value="17beta-HSD1_like_SDR_c"/>
    <property type="match status" value="1"/>
</dbReference>
<dbReference type="FunFam" id="3.40.50.720:FF:000137">
    <property type="entry name" value="Hydroxysteroid (17-beta) dehydrogenase 3"/>
    <property type="match status" value="1"/>
</dbReference>
<dbReference type="Gene3D" id="3.40.50.720">
    <property type="entry name" value="NAD(P)-binding Rossmann-like Domain"/>
    <property type="match status" value="1"/>
</dbReference>
<dbReference type="InterPro" id="IPR036291">
    <property type="entry name" value="NAD(P)-bd_dom_sf"/>
</dbReference>
<dbReference type="InterPro" id="IPR020904">
    <property type="entry name" value="Sc_DH/Rdtase_CS"/>
</dbReference>
<dbReference type="InterPro" id="IPR002347">
    <property type="entry name" value="SDR_fam"/>
</dbReference>
<dbReference type="InterPro" id="IPR051019">
    <property type="entry name" value="VLCFA-Steroid_DH"/>
</dbReference>
<dbReference type="PANTHER" id="PTHR43899:SF7">
    <property type="entry name" value="17-BETA-HYDROXYSTEROID DEHYDROGENASE TYPE 3"/>
    <property type="match status" value="1"/>
</dbReference>
<dbReference type="PANTHER" id="PTHR43899">
    <property type="entry name" value="RH59310P"/>
    <property type="match status" value="1"/>
</dbReference>
<dbReference type="Pfam" id="PF00106">
    <property type="entry name" value="adh_short"/>
    <property type="match status" value="1"/>
</dbReference>
<dbReference type="PIRSF" id="PIRSF000126">
    <property type="entry name" value="11-beta-HSD1"/>
    <property type="match status" value="1"/>
</dbReference>
<dbReference type="PRINTS" id="PR00081">
    <property type="entry name" value="GDHRDH"/>
</dbReference>
<dbReference type="PRINTS" id="PR00080">
    <property type="entry name" value="SDRFAMILY"/>
</dbReference>
<dbReference type="SUPFAM" id="SSF51735">
    <property type="entry name" value="NAD(P)-binding Rossmann-fold domains"/>
    <property type="match status" value="1"/>
</dbReference>
<dbReference type="PROSITE" id="PS00061">
    <property type="entry name" value="ADH_SHORT"/>
    <property type="match status" value="1"/>
</dbReference>
<evidence type="ECO:0000250" key="1"/>
<evidence type="ECO:0000250" key="2">
    <source>
        <dbReference type="UniProtKB" id="P70385"/>
    </source>
</evidence>
<evidence type="ECO:0000255" key="3"/>
<evidence type="ECO:0000255" key="4">
    <source>
        <dbReference type="PROSITE-ProRule" id="PRU10001"/>
    </source>
</evidence>
<evidence type="ECO:0000255" key="5">
    <source>
        <dbReference type="RuleBase" id="RU000363"/>
    </source>
</evidence>
<evidence type="ECO:0000269" key="6">
    <source>
    </source>
</evidence>
<evidence type="ECO:0000269" key="7">
    <source>
    </source>
</evidence>
<evidence type="ECO:0000305" key="8"/>
<evidence type="ECO:0000305" key="9">
    <source>
    </source>
</evidence>
<evidence type="ECO:0000305" key="10">
    <source>
    </source>
</evidence>
<evidence type="ECO:0000312" key="11">
    <source>
        <dbReference type="EMBL" id="AAS58451.1"/>
    </source>
</evidence>